<name>HSLV_ECOSM</name>
<feature type="chain" id="PRO_1000192678" description="ATP-dependent protease subunit HslV">
    <location>
        <begin position="1"/>
        <end position="176"/>
    </location>
</feature>
<feature type="active site" evidence="1">
    <location>
        <position position="2"/>
    </location>
</feature>
<feature type="binding site" evidence="1">
    <location>
        <position position="157"/>
    </location>
    <ligand>
        <name>Na(+)</name>
        <dbReference type="ChEBI" id="CHEBI:29101"/>
    </ligand>
</feature>
<feature type="binding site" evidence="1">
    <location>
        <position position="160"/>
    </location>
    <ligand>
        <name>Na(+)</name>
        <dbReference type="ChEBI" id="CHEBI:29101"/>
    </ligand>
</feature>
<feature type="binding site" evidence="1">
    <location>
        <position position="163"/>
    </location>
    <ligand>
        <name>Na(+)</name>
        <dbReference type="ChEBI" id="CHEBI:29101"/>
    </ligand>
</feature>
<proteinExistence type="inferred from homology"/>
<protein>
    <recommendedName>
        <fullName evidence="1">ATP-dependent protease subunit HslV</fullName>
        <ecNumber evidence="1">3.4.25.2</ecNumber>
    </recommendedName>
    <alternativeName>
        <fullName evidence="1">Heat shock protein HslV</fullName>
    </alternativeName>
</protein>
<accession>B1LNN7</accession>
<sequence>MTTIVSVRRNGHVVIAGDGQATLGNTVMKGNVKKVRRLYNDKVIAGFAGGTADAFTLFELFERKLEMHQGHLVKAAVELAKDWRTDRMLRKLEALLAVADETASLIITGNGDVVQPENDLIAIGSGGPYAQAAARALLENTELSAREIAEKALDIAGDICIYTNHFHTIEELSYKA</sequence>
<gene>
    <name evidence="1" type="primary">hslV</name>
    <name type="ordered locus">EcSMS35_4374</name>
</gene>
<reference key="1">
    <citation type="journal article" date="2008" name="J. Bacteriol.">
        <title>Insights into the environmental resistance gene pool from the genome sequence of the multidrug-resistant environmental isolate Escherichia coli SMS-3-5.</title>
        <authorList>
            <person name="Fricke W.F."/>
            <person name="Wright M.S."/>
            <person name="Lindell A.H."/>
            <person name="Harkins D.M."/>
            <person name="Baker-Austin C."/>
            <person name="Ravel J."/>
            <person name="Stepanauskas R."/>
        </authorList>
    </citation>
    <scope>NUCLEOTIDE SEQUENCE [LARGE SCALE GENOMIC DNA]</scope>
    <source>
        <strain>SMS-3-5 / SECEC</strain>
    </source>
</reference>
<dbReference type="EC" id="3.4.25.2" evidence="1"/>
<dbReference type="EMBL" id="CP000970">
    <property type="protein sequence ID" value="ACB16743.1"/>
    <property type="molecule type" value="Genomic_DNA"/>
</dbReference>
<dbReference type="RefSeq" id="WP_000208242.1">
    <property type="nucleotide sequence ID" value="NC_010498.1"/>
</dbReference>
<dbReference type="SMR" id="B1LNN7"/>
<dbReference type="MEROPS" id="T01.006"/>
<dbReference type="GeneID" id="93777966"/>
<dbReference type="KEGG" id="ecm:EcSMS35_4374"/>
<dbReference type="HOGENOM" id="CLU_093872_1_0_6"/>
<dbReference type="Proteomes" id="UP000007011">
    <property type="component" value="Chromosome"/>
</dbReference>
<dbReference type="GO" id="GO:0009376">
    <property type="term" value="C:HslUV protease complex"/>
    <property type="evidence" value="ECO:0007669"/>
    <property type="project" value="UniProtKB-UniRule"/>
</dbReference>
<dbReference type="GO" id="GO:0005839">
    <property type="term" value="C:proteasome core complex"/>
    <property type="evidence" value="ECO:0007669"/>
    <property type="project" value="InterPro"/>
</dbReference>
<dbReference type="GO" id="GO:0046872">
    <property type="term" value="F:metal ion binding"/>
    <property type="evidence" value="ECO:0007669"/>
    <property type="project" value="UniProtKB-KW"/>
</dbReference>
<dbReference type="GO" id="GO:0004298">
    <property type="term" value="F:threonine-type endopeptidase activity"/>
    <property type="evidence" value="ECO:0007669"/>
    <property type="project" value="UniProtKB-KW"/>
</dbReference>
<dbReference type="GO" id="GO:0051603">
    <property type="term" value="P:proteolysis involved in protein catabolic process"/>
    <property type="evidence" value="ECO:0007669"/>
    <property type="project" value="InterPro"/>
</dbReference>
<dbReference type="CDD" id="cd01913">
    <property type="entry name" value="protease_HslV"/>
    <property type="match status" value="1"/>
</dbReference>
<dbReference type="FunFam" id="3.60.20.10:FF:000002">
    <property type="entry name" value="ATP-dependent protease subunit HslV"/>
    <property type="match status" value="1"/>
</dbReference>
<dbReference type="Gene3D" id="3.60.20.10">
    <property type="entry name" value="Glutamine Phosphoribosylpyrophosphate, subunit 1, domain 1"/>
    <property type="match status" value="1"/>
</dbReference>
<dbReference type="HAMAP" id="MF_00248">
    <property type="entry name" value="HslV"/>
    <property type="match status" value="1"/>
</dbReference>
<dbReference type="InterPro" id="IPR022281">
    <property type="entry name" value="ATP-dep_Prtase_HsIV_su"/>
</dbReference>
<dbReference type="InterPro" id="IPR029055">
    <property type="entry name" value="Ntn_hydrolases_N"/>
</dbReference>
<dbReference type="InterPro" id="IPR001353">
    <property type="entry name" value="Proteasome_sua/b"/>
</dbReference>
<dbReference type="InterPro" id="IPR023333">
    <property type="entry name" value="Proteasome_suB-type"/>
</dbReference>
<dbReference type="NCBIfam" id="TIGR03692">
    <property type="entry name" value="ATP_dep_HslV"/>
    <property type="match status" value="1"/>
</dbReference>
<dbReference type="NCBIfam" id="NF003964">
    <property type="entry name" value="PRK05456.1"/>
    <property type="match status" value="1"/>
</dbReference>
<dbReference type="PANTHER" id="PTHR32194:SF0">
    <property type="entry name" value="ATP-DEPENDENT PROTEASE SUBUNIT HSLV"/>
    <property type="match status" value="1"/>
</dbReference>
<dbReference type="PANTHER" id="PTHR32194">
    <property type="entry name" value="METALLOPROTEASE TLDD"/>
    <property type="match status" value="1"/>
</dbReference>
<dbReference type="Pfam" id="PF00227">
    <property type="entry name" value="Proteasome"/>
    <property type="match status" value="1"/>
</dbReference>
<dbReference type="PIRSF" id="PIRSF039093">
    <property type="entry name" value="HslV"/>
    <property type="match status" value="1"/>
</dbReference>
<dbReference type="SUPFAM" id="SSF56235">
    <property type="entry name" value="N-terminal nucleophile aminohydrolases (Ntn hydrolases)"/>
    <property type="match status" value="1"/>
</dbReference>
<dbReference type="PROSITE" id="PS51476">
    <property type="entry name" value="PROTEASOME_BETA_2"/>
    <property type="match status" value="1"/>
</dbReference>
<comment type="function">
    <text evidence="1">Protease subunit of a proteasome-like degradation complex believed to be a general protein degrading machinery.</text>
</comment>
<comment type="catalytic activity">
    <reaction evidence="1">
        <text>ATP-dependent cleavage of peptide bonds with broad specificity.</text>
        <dbReference type="EC" id="3.4.25.2"/>
    </reaction>
</comment>
<comment type="activity regulation">
    <text evidence="1">Allosterically activated by HslU binding.</text>
</comment>
<comment type="subunit">
    <text evidence="1">A double ring-shaped homohexamer of HslV is capped on each side by a ring-shaped HslU homohexamer. The assembly of the HslU/HslV complex is dependent on binding of ATP.</text>
</comment>
<comment type="subcellular location">
    <subcellularLocation>
        <location evidence="1">Cytoplasm</location>
    </subcellularLocation>
</comment>
<comment type="induction">
    <text evidence="1">By heat shock.</text>
</comment>
<comment type="similarity">
    <text evidence="1">Belongs to the peptidase T1B family. HslV subfamily.</text>
</comment>
<evidence type="ECO:0000255" key="1">
    <source>
        <dbReference type="HAMAP-Rule" id="MF_00248"/>
    </source>
</evidence>
<organism>
    <name type="scientific">Escherichia coli (strain SMS-3-5 / SECEC)</name>
    <dbReference type="NCBI Taxonomy" id="439855"/>
    <lineage>
        <taxon>Bacteria</taxon>
        <taxon>Pseudomonadati</taxon>
        <taxon>Pseudomonadota</taxon>
        <taxon>Gammaproteobacteria</taxon>
        <taxon>Enterobacterales</taxon>
        <taxon>Enterobacteriaceae</taxon>
        <taxon>Escherichia</taxon>
    </lineage>
</organism>
<keyword id="KW-0021">Allosteric enzyme</keyword>
<keyword id="KW-0963">Cytoplasm</keyword>
<keyword id="KW-0378">Hydrolase</keyword>
<keyword id="KW-0479">Metal-binding</keyword>
<keyword id="KW-0645">Protease</keyword>
<keyword id="KW-0915">Sodium</keyword>
<keyword id="KW-0346">Stress response</keyword>
<keyword id="KW-0888">Threonine protease</keyword>